<name>RS18_BRUA2</name>
<dbReference type="EMBL" id="AM040264">
    <property type="protein sequence ID" value="CAJ10435.1"/>
    <property type="molecule type" value="Genomic_DNA"/>
</dbReference>
<dbReference type="RefSeq" id="WP_002963610.1">
    <property type="nucleotide sequence ID" value="NZ_KN046823.1"/>
</dbReference>
<dbReference type="SMR" id="Q2YMH0"/>
<dbReference type="STRING" id="359391.BAB1_0479"/>
<dbReference type="GeneID" id="97914641"/>
<dbReference type="KEGG" id="bmf:BAB1_0479"/>
<dbReference type="PATRIC" id="fig|359391.11.peg.2519"/>
<dbReference type="HOGENOM" id="CLU_148710_2_2_5"/>
<dbReference type="Proteomes" id="UP000002719">
    <property type="component" value="Chromosome I"/>
</dbReference>
<dbReference type="GO" id="GO:0022627">
    <property type="term" value="C:cytosolic small ribosomal subunit"/>
    <property type="evidence" value="ECO:0007669"/>
    <property type="project" value="TreeGrafter"/>
</dbReference>
<dbReference type="GO" id="GO:0070181">
    <property type="term" value="F:small ribosomal subunit rRNA binding"/>
    <property type="evidence" value="ECO:0007669"/>
    <property type="project" value="TreeGrafter"/>
</dbReference>
<dbReference type="GO" id="GO:0003735">
    <property type="term" value="F:structural constituent of ribosome"/>
    <property type="evidence" value="ECO:0007669"/>
    <property type="project" value="InterPro"/>
</dbReference>
<dbReference type="GO" id="GO:0006412">
    <property type="term" value="P:translation"/>
    <property type="evidence" value="ECO:0007669"/>
    <property type="project" value="UniProtKB-UniRule"/>
</dbReference>
<dbReference type="Gene3D" id="4.10.640.10">
    <property type="entry name" value="Ribosomal protein S18"/>
    <property type="match status" value="1"/>
</dbReference>
<dbReference type="HAMAP" id="MF_00270">
    <property type="entry name" value="Ribosomal_bS18"/>
    <property type="match status" value="1"/>
</dbReference>
<dbReference type="InterPro" id="IPR001648">
    <property type="entry name" value="Ribosomal_bS18"/>
</dbReference>
<dbReference type="InterPro" id="IPR018275">
    <property type="entry name" value="Ribosomal_bS18_CS"/>
</dbReference>
<dbReference type="InterPro" id="IPR036870">
    <property type="entry name" value="Ribosomal_bS18_sf"/>
</dbReference>
<dbReference type="NCBIfam" id="TIGR00165">
    <property type="entry name" value="S18"/>
    <property type="match status" value="1"/>
</dbReference>
<dbReference type="PANTHER" id="PTHR13479">
    <property type="entry name" value="30S RIBOSOMAL PROTEIN S18"/>
    <property type="match status" value="1"/>
</dbReference>
<dbReference type="PANTHER" id="PTHR13479:SF40">
    <property type="entry name" value="SMALL RIBOSOMAL SUBUNIT PROTEIN BS18M"/>
    <property type="match status" value="1"/>
</dbReference>
<dbReference type="Pfam" id="PF01084">
    <property type="entry name" value="Ribosomal_S18"/>
    <property type="match status" value="1"/>
</dbReference>
<dbReference type="PRINTS" id="PR00974">
    <property type="entry name" value="RIBOSOMALS18"/>
</dbReference>
<dbReference type="SUPFAM" id="SSF46911">
    <property type="entry name" value="Ribosomal protein S18"/>
    <property type="match status" value="1"/>
</dbReference>
<dbReference type="PROSITE" id="PS00057">
    <property type="entry name" value="RIBOSOMAL_S18"/>
    <property type="match status" value="1"/>
</dbReference>
<accession>Q2YMH0</accession>
<organism>
    <name type="scientific">Brucella abortus (strain 2308)</name>
    <dbReference type="NCBI Taxonomy" id="359391"/>
    <lineage>
        <taxon>Bacteria</taxon>
        <taxon>Pseudomonadati</taxon>
        <taxon>Pseudomonadota</taxon>
        <taxon>Alphaproteobacteria</taxon>
        <taxon>Hyphomicrobiales</taxon>
        <taxon>Brucellaceae</taxon>
        <taxon>Brucella/Ochrobactrum group</taxon>
        <taxon>Brucella</taxon>
    </lineage>
</organism>
<keyword id="KW-1185">Reference proteome</keyword>
<keyword id="KW-0687">Ribonucleoprotein</keyword>
<keyword id="KW-0689">Ribosomal protein</keyword>
<keyword id="KW-0694">RNA-binding</keyword>
<keyword id="KW-0699">rRNA-binding</keyword>
<evidence type="ECO:0000255" key="1">
    <source>
        <dbReference type="HAMAP-Rule" id="MF_00270"/>
    </source>
</evidence>
<evidence type="ECO:0000256" key="2">
    <source>
        <dbReference type="SAM" id="MobiDB-lite"/>
    </source>
</evidence>
<evidence type="ECO:0000305" key="3"/>
<proteinExistence type="inferred from homology"/>
<sequence length="82" mass="9562">MVDINQIPTRRPFHRRRKTCPFSGANAPKIDYKDVKLLQRYISERGKIVPSRITAVSQKKQRELAKAIKRARFLGLLPYVVK</sequence>
<feature type="chain" id="PRO_1000003453" description="Small ribosomal subunit protein bS18">
    <location>
        <begin position="1"/>
        <end position="82"/>
    </location>
</feature>
<feature type="region of interest" description="Disordered" evidence="2">
    <location>
        <begin position="1"/>
        <end position="20"/>
    </location>
</feature>
<protein>
    <recommendedName>
        <fullName evidence="1">Small ribosomal subunit protein bS18</fullName>
    </recommendedName>
    <alternativeName>
        <fullName evidence="3">30S ribosomal protein S18</fullName>
    </alternativeName>
</protein>
<gene>
    <name evidence="1" type="primary">rpsR</name>
    <name type="ordered locus">BAB1_0479</name>
</gene>
<comment type="function">
    <text evidence="1">Binds as a heterodimer with protein bS6 to the central domain of the 16S rRNA, where it helps stabilize the platform of the 30S subunit.</text>
</comment>
<comment type="subunit">
    <text evidence="1">Part of the 30S ribosomal subunit. Forms a tight heterodimer with protein bS6.</text>
</comment>
<comment type="similarity">
    <text evidence="1">Belongs to the bacterial ribosomal protein bS18 family.</text>
</comment>
<reference key="1">
    <citation type="journal article" date="2005" name="Infect. Immun.">
        <title>Whole-genome analyses of speciation events in pathogenic Brucellae.</title>
        <authorList>
            <person name="Chain P.S."/>
            <person name="Comerci D.J."/>
            <person name="Tolmasky M.E."/>
            <person name="Larimer F.W."/>
            <person name="Malfatti S.A."/>
            <person name="Vergez L.M."/>
            <person name="Aguero F."/>
            <person name="Land M.L."/>
            <person name="Ugalde R.A."/>
            <person name="Garcia E."/>
        </authorList>
    </citation>
    <scope>NUCLEOTIDE SEQUENCE [LARGE SCALE GENOMIC DNA]</scope>
    <source>
        <strain>2308</strain>
    </source>
</reference>